<reference key="1">
    <citation type="journal article" date="2003" name="DNA Res.">
        <title>Complete genome structure of Gloeobacter violaceus PCC 7421, a cyanobacterium that lacks thylakoids.</title>
        <authorList>
            <person name="Nakamura Y."/>
            <person name="Kaneko T."/>
            <person name="Sato S."/>
            <person name="Mimuro M."/>
            <person name="Miyashita H."/>
            <person name="Tsuchiya T."/>
            <person name="Sasamoto S."/>
            <person name="Watanabe A."/>
            <person name="Kawashima K."/>
            <person name="Kishida Y."/>
            <person name="Kiyokawa C."/>
            <person name="Kohara M."/>
            <person name="Matsumoto M."/>
            <person name="Matsuno A."/>
            <person name="Nakazaki N."/>
            <person name="Shimpo S."/>
            <person name="Takeuchi C."/>
            <person name="Yamada M."/>
            <person name="Tabata S."/>
        </authorList>
    </citation>
    <scope>NUCLEOTIDE SEQUENCE [LARGE SCALE GENOMIC DNA]</scope>
    <source>
        <strain>ATCC 29082 / PCC 7421</strain>
    </source>
</reference>
<proteinExistence type="inferred from homology"/>
<keyword id="KW-0012">Acyltransferase</keyword>
<keyword id="KW-0963">Cytoplasm</keyword>
<keyword id="KW-0408">Iron</keyword>
<keyword id="KW-0479">Metal-binding</keyword>
<keyword id="KW-1185">Reference proteome</keyword>
<keyword id="KW-0808">Transferase</keyword>
<keyword id="KW-0819">tRNA processing</keyword>
<organism>
    <name type="scientific">Gloeobacter violaceus (strain ATCC 29082 / PCC 7421)</name>
    <dbReference type="NCBI Taxonomy" id="251221"/>
    <lineage>
        <taxon>Bacteria</taxon>
        <taxon>Bacillati</taxon>
        <taxon>Cyanobacteriota</taxon>
        <taxon>Cyanophyceae</taxon>
        <taxon>Gloeobacterales</taxon>
        <taxon>Gloeobacteraceae</taxon>
        <taxon>Gloeobacter</taxon>
    </lineage>
</organism>
<dbReference type="EC" id="2.3.1.234" evidence="1"/>
<dbReference type="EMBL" id="BA000045">
    <property type="protein sequence ID" value="BAC89295.1"/>
    <property type="molecule type" value="Genomic_DNA"/>
</dbReference>
<dbReference type="RefSeq" id="NP_924300.1">
    <property type="nucleotide sequence ID" value="NC_005125.1"/>
</dbReference>
<dbReference type="RefSeq" id="WP_011141354.1">
    <property type="nucleotide sequence ID" value="NC_005125.1"/>
</dbReference>
<dbReference type="SMR" id="Q7NKX2"/>
<dbReference type="FunCoup" id="Q7NKX2">
    <property type="interactions" value="335"/>
</dbReference>
<dbReference type="STRING" id="251221.gene:10758837"/>
<dbReference type="EnsemblBacteria" id="BAC89295">
    <property type="protein sequence ID" value="BAC89295"/>
    <property type="gene ID" value="BAC89295"/>
</dbReference>
<dbReference type="KEGG" id="gvi:gll1354"/>
<dbReference type="PATRIC" id="fig|251221.4.peg.1381"/>
<dbReference type="eggNOG" id="COG0533">
    <property type="taxonomic scope" value="Bacteria"/>
</dbReference>
<dbReference type="HOGENOM" id="CLU_023208_0_2_3"/>
<dbReference type="InParanoid" id="Q7NKX2"/>
<dbReference type="OrthoDB" id="9806197at2"/>
<dbReference type="PhylomeDB" id="Q7NKX2"/>
<dbReference type="Proteomes" id="UP000000557">
    <property type="component" value="Chromosome"/>
</dbReference>
<dbReference type="GO" id="GO:0005737">
    <property type="term" value="C:cytoplasm"/>
    <property type="evidence" value="ECO:0007669"/>
    <property type="project" value="UniProtKB-SubCell"/>
</dbReference>
<dbReference type="GO" id="GO:0005506">
    <property type="term" value="F:iron ion binding"/>
    <property type="evidence" value="ECO:0007669"/>
    <property type="project" value="UniProtKB-UniRule"/>
</dbReference>
<dbReference type="GO" id="GO:0061711">
    <property type="term" value="F:N(6)-L-threonylcarbamoyladenine synthase activity"/>
    <property type="evidence" value="ECO:0007669"/>
    <property type="project" value="UniProtKB-EC"/>
</dbReference>
<dbReference type="GO" id="GO:0002949">
    <property type="term" value="P:tRNA threonylcarbamoyladenosine modification"/>
    <property type="evidence" value="ECO:0007669"/>
    <property type="project" value="UniProtKB-UniRule"/>
</dbReference>
<dbReference type="CDD" id="cd24133">
    <property type="entry name" value="ASKHA_NBD_TsaD_bac"/>
    <property type="match status" value="1"/>
</dbReference>
<dbReference type="FunFam" id="3.30.420.40:FF:000040">
    <property type="entry name" value="tRNA N6-adenosine threonylcarbamoyltransferase"/>
    <property type="match status" value="1"/>
</dbReference>
<dbReference type="Gene3D" id="3.30.420.40">
    <property type="match status" value="2"/>
</dbReference>
<dbReference type="HAMAP" id="MF_01445">
    <property type="entry name" value="TsaD"/>
    <property type="match status" value="1"/>
</dbReference>
<dbReference type="InterPro" id="IPR043129">
    <property type="entry name" value="ATPase_NBD"/>
</dbReference>
<dbReference type="InterPro" id="IPR000905">
    <property type="entry name" value="Gcp-like_dom"/>
</dbReference>
<dbReference type="InterPro" id="IPR017861">
    <property type="entry name" value="KAE1/TsaD"/>
</dbReference>
<dbReference type="InterPro" id="IPR022450">
    <property type="entry name" value="TsaD"/>
</dbReference>
<dbReference type="NCBIfam" id="TIGR00329">
    <property type="entry name" value="gcp_kae1"/>
    <property type="match status" value="1"/>
</dbReference>
<dbReference type="NCBIfam" id="TIGR03723">
    <property type="entry name" value="T6A_TsaD_YgjD"/>
    <property type="match status" value="1"/>
</dbReference>
<dbReference type="PANTHER" id="PTHR11735">
    <property type="entry name" value="TRNA N6-ADENOSINE THREONYLCARBAMOYLTRANSFERASE"/>
    <property type="match status" value="1"/>
</dbReference>
<dbReference type="PANTHER" id="PTHR11735:SF6">
    <property type="entry name" value="TRNA N6-ADENOSINE THREONYLCARBAMOYLTRANSFERASE, MITOCHONDRIAL"/>
    <property type="match status" value="1"/>
</dbReference>
<dbReference type="Pfam" id="PF00814">
    <property type="entry name" value="TsaD"/>
    <property type="match status" value="1"/>
</dbReference>
<dbReference type="PRINTS" id="PR00789">
    <property type="entry name" value="OSIALOPTASE"/>
</dbReference>
<dbReference type="SUPFAM" id="SSF53067">
    <property type="entry name" value="Actin-like ATPase domain"/>
    <property type="match status" value="2"/>
</dbReference>
<protein>
    <recommendedName>
        <fullName evidence="1">tRNA N6-adenosine threonylcarbamoyltransferase</fullName>
        <ecNumber evidence="1">2.3.1.234</ecNumber>
    </recommendedName>
    <alternativeName>
        <fullName evidence="1">N6-L-threonylcarbamoyladenine synthase</fullName>
        <shortName evidence="1">t(6)A synthase</shortName>
    </alternativeName>
    <alternativeName>
        <fullName evidence="1">t(6)A37 threonylcarbamoyladenosine biosynthesis protein TsaD</fullName>
    </alternativeName>
    <alternativeName>
        <fullName evidence="1">tRNA threonylcarbamoyladenosine biosynthesis protein TsaD</fullName>
    </alternativeName>
</protein>
<accession>Q7NKX2</accession>
<feature type="chain" id="PRO_0000303376" description="tRNA N6-adenosine threonylcarbamoyltransferase">
    <location>
        <begin position="1"/>
        <end position="342"/>
    </location>
</feature>
<feature type="binding site" evidence="1">
    <location>
        <position position="111"/>
    </location>
    <ligand>
        <name>Fe cation</name>
        <dbReference type="ChEBI" id="CHEBI:24875"/>
    </ligand>
</feature>
<feature type="binding site" evidence="1">
    <location>
        <position position="115"/>
    </location>
    <ligand>
        <name>Fe cation</name>
        <dbReference type="ChEBI" id="CHEBI:24875"/>
    </ligand>
</feature>
<feature type="binding site" evidence="1">
    <location>
        <begin position="134"/>
        <end position="138"/>
    </location>
    <ligand>
        <name>substrate</name>
    </ligand>
</feature>
<feature type="binding site" evidence="1">
    <location>
        <position position="167"/>
    </location>
    <ligand>
        <name>substrate</name>
    </ligand>
</feature>
<feature type="binding site" evidence="1">
    <location>
        <position position="180"/>
    </location>
    <ligand>
        <name>substrate</name>
    </ligand>
</feature>
<feature type="binding site" evidence="1">
    <location>
        <position position="184"/>
    </location>
    <ligand>
        <name>substrate</name>
    </ligand>
</feature>
<feature type="binding site" evidence="1">
    <location>
        <position position="273"/>
    </location>
    <ligand>
        <name>substrate</name>
    </ligand>
</feature>
<feature type="binding site" evidence="1">
    <location>
        <position position="298"/>
    </location>
    <ligand>
        <name>Fe cation</name>
        <dbReference type="ChEBI" id="CHEBI:24875"/>
    </ligand>
</feature>
<comment type="function">
    <text evidence="1">Required for the formation of a threonylcarbamoyl group on adenosine at position 37 (t(6)A37) in tRNAs that read codons beginning with adenine. Is involved in the transfer of the threonylcarbamoyl moiety of threonylcarbamoyl-AMP (TC-AMP) to the N6 group of A37, together with TsaE and TsaB. TsaD likely plays a direct catalytic role in this reaction.</text>
</comment>
<comment type="catalytic activity">
    <reaction evidence="1">
        <text>L-threonylcarbamoyladenylate + adenosine(37) in tRNA = N(6)-L-threonylcarbamoyladenosine(37) in tRNA + AMP + H(+)</text>
        <dbReference type="Rhea" id="RHEA:37059"/>
        <dbReference type="Rhea" id="RHEA-COMP:10162"/>
        <dbReference type="Rhea" id="RHEA-COMP:10163"/>
        <dbReference type="ChEBI" id="CHEBI:15378"/>
        <dbReference type="ChEBI" id="CHEBI:73682"/>
        <dbReference type="ChEBI" id="CHEBI:74411"/>
        <dbReference type="ChEBI" id="CHEBI:74418"/>
        <dbReference type="ChEBI" id="CHEBI:456215"/>
        <dbReference type="EC" id="2.3.1.234"/>
    </reaction>
</comment>
<comment type="cofactor">
    <cofactor evidence="1">
        <name>Fe(2+)</name>
        <dbReference type="ChEBI" id="CHEBI:29033"/>
    </cofactor>
    <text evidence="1">Binds 1 Fe(2+) ion per subunit.</text>
</comment>
<comment type="subcellular location">
    <subcellularLocation>
        <location evidence="1">Cytoplasm</location>
    </subcellularLocation>
</comment>
<comment type="similarity">
    <text evidence="1">Belongs to the KAE1 / TsaD family.</text>
</comment>
<evidence type="ECO:0000255" key="1">
    <source>
        <dbReference type="HAMAP-Rule" id="MF_01445"/>
    </source>
</evidence>
<gene>
    <name evidence="1" type="primary">tsaD</name>
    <name type="synonym">gcp</name>
    <name type="ordered locus">gll1354</name>
</gene>
<sequence>MTTIFAIETSCDESAAAIVRGRTVVASIIASQIDVHRLTGGVVPEVASREHLQALGGVIAACFAEGGLGWADIDAVAFTCAPGLVGSLLMGSMAAKTLALVHARPLVGIHHLEGHIYSAFLSDPALEPPFLCLLVSGGHTSLVAVEDHGRYRILGRTRDDAVGEAYDKVARVLGLGYPGGPAIDKLAQRGDPRAFALPGGRVESPFDTSFSGLKTAVLRLAEKHRLQRLPIDRADLAASFQRTVVETLAERVELALAHTGYDTVVVAGGVSANRGLRERLGQAGPYRAVFPPMHFCTDNAAMIACAGVARFERGFRSSLDLPVQSRLSLEACDSLYQCLPVP</sequence>
<name>TSAD_GLOVI</name>